<dbReference type="EMBL" id="CP001068">
    <property type="protein sequence ID" value="ACD28401.1"/>
    <property type="molecule type" value="Genomic_DNA"/>
</dbReference>
<dbReference type="SMR" id="B2UEK1"/>
<dbReference type="STRING" id="402626.Rpic_3279"/>
<dbReference type="KEGG" id="rpi:Rpic_3279"/>
<dbReference type="eggNOG" id="COG1841">
    <property type="taxonomic scope" value="Bacteria"/>
</dbReference>
<dbReference type="HOGENOM" id="CLU_131047_1_4_4"/>
<dbReference type="GO" id="GO:0022625">
    <property type="term" value="C:cytosolic large ribosomal subunit"/>
    <property type="evidence" value="ECO:0007669"/>
    <property type="project" value="TreeGrafter"/>
</dbReference>
<dbReference type="GO" id="GO:0003735">
    <property type="term" value="F:structural constituent of ribosome"/>
    <property type="evidence" value="ECO:0007669"/>
    <property type="project" value="InterPro"/>
</dbReference>
<dbReference type="GO" id="GO:0006412">
    <property type="term" value="P:translation"/>
    <property type="evidence" value="ECO:0007669"/>
    <property type="project" value="UniProtKB-UniRule"/>
</dbReference>
<dbReference type="CDD" id="cd01658">
    <property type="entry name" value="Ribosomal_L30"/>
    <property type="match status" value="1"/>
</dbReference>
<dbReference type="FunFam" id="3.30.1390.20:FF:000001">
    <property type="entry name" value="50S ribosomal protein L30"/>
    <property type="match status" value="1"/>
</dbReference>
<dbReference type="Gene3D" id="3.30.1390.20">
    <property type="entry name" value="Ribosomal protein L30, ferredoxin-like fold domain"/>
    <property type="match status" value="1"/>
</dbReference>
<dbReference type="HAMAP" id="MF_01371_B">
    <property type="entry name" value="Ribosomal_uL30_B"/>
    <property type="match status" value="1"/>
</dbReference>
<dbReference type="InterPro" id="IPR036919">
    <property type="entry name" value="Ribo_uL30_ferredoxin-like_sf"/>
</dbReference>
<dbReference type="InterPro" id="IPR005996">
    <property type="entry name" value="Ribosomal_uL30_bac-type"/>
</dbReference>
<dbReference type="InterPro" id="IPR016082">
    <property type="entry name" value="Ribosomal_uL30_ferredoxin-like"/>
</dbReference>
<dbReference type="NCBIfam" id="TIGR01308">
    <property type="entry name" value="rpmD_bact"/>
    <property type="match status" value="1"/>
</dbReference>
<dbReference type="PANTHER" id="PTHR15892:SF2">
    <property type="entry name" value="LARGE RIBOSOMAL SUBUNIT PROTEIN UL30M"/>
    <property type="match status" value="1"/>
</dbReference>
<dbReference type="PANTHER" id="PTHR15892">
    <property type="entry name" value="MITOCHONDRIAL RIBOSOMAL PROTEIN L30"/>
    <property type="match status" value="1"/>
</dbReference>
<dbReference type="Pfam" id="PF00327">
    <property type="entry name" value="Ribosomal_L30"/>
    <property type="match status" value="1"/>
</dbReference>
<dbReference type="PIRSF" id="PIRSF002211">
    <property type="entry name" value="Ribosomal_L30_bac-type"/>
    <property type="match status" value="1"/>
</dbReference>
<dbReference type="SUPFAM" id="SSF55129">
    <property type="entry name" value="Ribosomal protein L30p/L7e"/>
    <property type="match status" value="1"/>
</dbReference>
<organism>
    <name type="scientific">Ralstonia pickettii (strain 12J)</name>
    <dbReference type="NCBI Taxonomy" id="402626"/>
    <lineage>
        <taxon>Bacteria</taxon>
        <taxon>Pseudomonadati</taxon>
        <taxon>Pseudomonadota</taxon>
        <taxon>Betaproteobacteria</taxon>
        <taxon>Burkholderiales</taxon>
        <taxon>Burkholderiaceae</taxon>
        <taxon>Ralstonia</taxon>
    </lineage>
</organism>
<reference key="1">
    <citation type="submission" date="2008-05" db="EMBL/GenBank/DDBJ databases">
        <title>Complete sequence of chromosome 1 of Ralstonia pickettii 12J.</title>
        <authorList>
            <person name="Lucas S."/>
            <person name="Copeland A."/>
            <person name="Lapidus A."/>
            <person name="Glavina del Rio T."/>
            <person name="Dalin E."/>
            <person name="Tice H."/>
            <person name="Bruce D."/>
            <person name="Goodwin L."/>
            <person name="Pitluck S."/>
            <person name="Meincke L."/>
            <person name="Brettin T."/>
            <person name="Detter J.C."/>
            <person name="Han C."/>
            <person name="Kuske C.R."/>
            <person name="Schmutz J."/>
            <person name="Larimer F."/>
            <person name="Land M."/>
            <person name="Hauser L."/>
            <person name="Kyrpides N."/>
            <person name="Mikhailova N."/>
            <person name="Marsh T."/>
            <person name="Richardson P."/>
        </authorList>
    </citation>
    <scope>NUCLEOTIDE SEQUENCE [LARGE SCALE GENOMIC DNA]</scope>
    <source>
        <strain>12J</strain>
    </source>
</reference>
<feature type="chain" id="PRO_1000144706" description="Large ribosomal subunit protein uL30">
    <location>
        <begin position="1"/>
        <end position="60"/>
    </location>
</feature>
<gene>
    <name evidence="1" type="primary">rpmD</name>
    <name type="ordered locus">Rpic_3279</name>
</gene>
<keyword id="KW-0687">Ribonucleoprotein</keyword>
<keyword id="KW-0689">Ribosomal protein</keyword>
<accession>B2UEK1</accession>
<evidence type="ECO:0000255" key="1">
    <source>
        <dbReference type="HAMAP-Rule" id="MF_01371"/>
    </source>
</evidence>
<evidence type="ECO:0000305" key="2"/>
<comment type="subunit">
    <text evidence="1">Part of the 50S ribosomal subunit.</text>
</comment>
<comment type="similarity">
    <text evidence="1">Belongs to the universal ribosomal protein uL30 family.</text>
</comment>
<protein>
    <recommendedName>
        <fullName evidence="1">Large ribosomal subunit protein uL30</fullName>
    </recommendedName>
    <alternativeName>
        <fullName evidence="2">50S ribosomal protein L30</fullName>
    </alternativeName>
</protein>
<proteinExistence type="inferred from homology"/>
<sequence>MSQKTVKVQLVRSLIGTREDHRATVRGLGLRRMNSVSELQDTPAVRGMINKVSYLVKVIG</sequence>
<name>RL30_RALPJ</name>